<accession>Q3IX60</accession>
<comment type="catalytic activity">
    <reaction evidence="1">
        <text>beta-D-fructose 1,6-bisphosphate + H2O = beta-D-fructose 6-phosphate + phosphate</text>
        <dbReference type="Rhea" id="RHEA:11064"/>
        <dbReference type="ChEBI" id="CHEBI:15377"/>
        <dbReference type="ChEBI" id="CHEBI:32966"/>
        <dbReference type="ChEBI" id="CHEBI:43474"/>
        <dbReference type="ChEBI" id="CHEBI:57634"/>
        <dbReference type="EC" id="3.1.3.11"/>
    </reaction>
</comment>
<comment type="cofactor">
    <cofactor evidence="1">
        <name>Mg(2+)</name>
        <dbReference type="ChEBI" id="CHEBI:18420"/>
    </cofactor>
    <text evidence="1">Binds 2 magnesium ions per subunit.</text>
</comment>
<comment type="pathway">
    <text evidence="1">Carbohydrate biosynthesis; Calvin cycle.</text>
</comment>
<comment type="subunit">
    <text evidence="1">Homotetramer.</text>
</comment>
<comment type="subcellular location">
    <subcellularLocation>
        <location evidence="1">Cytoplasm</location>
    </subcellularLocation>
</comment>
<comment type="similarity">
    <text evidence="1">Belongs to the FBPase class 1 family.</text>
</comment>
<evidence type="ECO:0000255" key="1">
    <source>
        <dbReference type="HAMAP-Rule" id="MF_01855"/>
    </source>
</evidence>
<feature type="chain" id="PRO_0000364667" description="Fructose-1,6-bisphosphatase class 1 2">
    <location>
        <begin position="1"/>
        <end position="331"/>
    </location>
</feature>
<feature type="binding site" evidence="1">
    <location>
        <position position="80"/>
    </location>
    <ligand>
        <name>Mg(2+)</name>
        <dbReference type="ChEBI" id="CHEBI:18420"/>
        <label>1</label>
    </ligand>
</feature>
<feature type="binding site" evidence="1">
    <location>
        <position position="98"/>
    </location>
    <ligand>
        <name>Mg(2+)</name>
        <dbReference type="ChEBI" id="CHEBI:18420"/>
        <label>1</label>
    </ligand>
</feature>
<feature type="binding site" evidence="1">
    <location>
        <position position="98"/>
    </location>
    <ligand>
        <name>Mg(2+)</name>
        <dbReference type="ChEBI" id="CHEBI:18420"/>
        <label>2</label>
    </ligand>
</feature>
<feature type="binding site" evidence="1">
    <location>
        <position position="100"/>
    </location>
    <ligand>
        <name>Mg(2+)</name>
        <dbReference type="ChEBI" id="CHEBI:18420"/>
        <label>1</label>
    </ligand>
</feature>
<feature type="binding site" evidence="1">
    <location>
        <begin position="101"/>
        <end position="104"/>
    </location>
    <ligand>
        <name>substrate</name>
    </ligand>
</feature>
<feature type="binding site" evidence="1">
    <location>
        <position position="101"/>
    </location>
    <ligand>
        <name>Mg(2+)</name>
        <dbReference type="ChEBI" id="CHEBI:18420"/>
        <label>2</label>
    </ligand>
</feature>
<feature type="binding site" evidence="1">
    <location>
        <position position="189"/>
    </location>
    <ligand>
        <name>substrate</name>
    </ligand>
</feature>
<feature type="binding site" evidence="1">
    <location>
        <position position="261"/>
    </location>
    <ligand>
        <name>Mg(2+)</name>
        <dbReference type="ChEBI" id="CHEBI:18420"/>
        <label>2</label>
    </ligand>
</feature>
<name>F16A2_CERS4</name>
<gene>
    <name evidence="1" type="primary">fbp2</name>
    <name type="ordered locus">RHOS4_33060</name>
    <name type="ORF">RSP_3266</name>
</gene>
<sequence length="331" mass="35256">MAIELEDLGLSPDVADVMQRLARVGAGIARIISRNGLERDLGAGVGTNAGGDGQKALDVIADDAFRAALEGSAVAYYASEEQDEVVTLGEGSLALAIDPLDGSSNIDVNVSIGTIFSIFPAAAGPEASFLRPGTEQIAGGYIIYGPQCALVCSFGQGVQHWVLDLDAGIFRRMPDIRPLPAETSEFAINASNYRHWPQPIRAFVDDLVAGAEGPRGKNFNMRWIASLVAETHRILMRGGVFLYPGDERKGYERGRLRHVYECAPIAFLIANVGGGATDGCADILTALPDRLHARTPFVFGCASKVARVAAYHDLACEETSALFGSRGLFRS</sequence>
<protein>
    <recommendedName>
        <fullName evidence="1">Fructose-1,6-bisphosphatase class 1 2</fullName>
        <shortName evidence="1">FBPase class 1 2</shortName>
        <ecNumber evidence="1">3.1.3.11</ecNumber>
    </recommendedName>
    <alternativeName>
        <fullName evidence="1">D-fructose-1,6-bisphosphate 1-phosphohydrolase class 1 2</fullName>
    </alternativeName>
</protein>
<keyword id="KW-0113">Calvin cycle</keyword>
<keyword id="KW-0119">Carbohydrate metabolism</keyword>
<keyword id="KW-0963">Cytoplasm</keyword>
<keyword id="KW-0378">Hydrolase</keyword>
<keyword id="KW-0460">Magnesium</keyword>
<keyword id="KW-0479">Metal-binding</keyword>
<keyword id="KW-1185">Reference proteome</keyword>
<dbReference type="EC" id="3.1.3.11" evidence="1"/>
<dbReference type="EMBL" id="CP000144">
    <property type="protein sequence ID" value="ABA80874.1"/>
    <property type="molecule type" value="Genomic_DNA"/>
</dbReference>
<dbReference type="RefSeq" id="WP_011339166.1">
    <property type="nucleotide sequence ID" value="NC_007494.2"/>
</dbReference>
<dbReference type="RefSeq" id="YP_354775.1">
    <property type="nucleotide sequence ID" value="NC_007494.2"/>
</dbReference>
<dbReference type="SMR" id="Q3IX60"/>
<dbReference type="STRING" id="272943.RSP_3266"/>
<dbReference type="EnsemblBacteria" id="ABA80874">
    <property type="protein sequence ID" value="ABA80874"/>
    <property type="gene ID" value="RSP_3266"/>
</dbReference>
<dbReference type="GeneID" id="3721867"/>
<dbReference type="KEGG" id="rsp:RSP_3266"/>
<dbReference type="PATRIC" id="fig|272943.9.peg.3693"/>
<dbReference type="eggNOG" id="COG0158">
    <property type="taxonomic scope" value="Bacteria"/>
</dbReference>
<dbReference type="OrthoDB" id="9806756at2"/>
<dbReference type="PhylomeDB" id="Q3IX60"/>
<dbReference type="UniPathway" id="UPA00116"/>
<dbReference type="Proteomes" id="UP000002703">
    <property type="component" value="Chromosome 2"/>
</dbReference>
<dbReference type="GO" id="GO:0005829">
    <property type="term" value="C:cytosol"/>
    <property type="evidence" value="ECO:0007669"/>
    <property type="project" value="TreeGrafter"/>
</dbReference>
<dbReference type="GO" id="GO:0042132">
    <property type="term" value="F:fructose 1,6-bisphosphate 1-phosphatase activity"/>
    <property type="evidence" value="ECO:0007669"/>
    <property type="project" value="UniProtKB-UniRule"/>
</dbReference>
<dbReference type="GO" id="GO:0000287">
    <property type="term" value="F:magnesium ion binding"/>
    <property type="evidence" value="ECO:0007669"/>
    <property type="project" value="UniProtKB-UniRule"/>
</dbReference>
<dbReference type="GO" id="GO:0030388">
    <property type="term" value="P:fructose 1,6-bisphosphate metabolic process"/>
    <property type="evidence" value="ECO:0007669"/>
    <property type="project" value="TreeGrafter"/>
</dbReference>
<dbReference type="GO" id="GO:0006002">
    <property type="term" value="P:fructose 6-phosphate metabolic process"/>
    <property type="evidence" value="ECO:0007669"/>
    <property type="project" value="TreeGrafter"/>
</dbReference>
<dbReference type="GO" id="GO:0006000">
    <property type="term" value="P:fructose metabolic process"/>
    <property type="evidence" value="ECO:0007669"/>
    <property type="project" value="TreeGrafter"/>
</dbReference>
<dbReference type="GO" id="GO:0006094">
    <property type="term" value="P:gluconeogenesis"/>
    <property type="evidence" value="ECO:0007669"/>
    <property type="project" value="UniProtKB-UniRule"/>
</dbReference>
<dbReference type="GO" id="GO:0019253">
    <property type="term" value="P:reductive pentose-phosphate cycle"/>
    <property type="evidence" value="ECO:0007669"/>
    <property type="project" value="UniProtKB-UniRule"/>
</dbReference>
<dbReference type="GO" id="GO:0005986">
    <property type="term" value="P:sucrose biosynthetic process"/>
    <property type="evidence" value="ECO:0007669"/>
    <property type="project" value="TreeGrafter"/>
</dbReference>
<dbReference type="CDD" id="cd00354">
    <property type="entry name" value="FBPase"/>
    <property type="match status" value="1"/>
</dbReference>
<dbReference type="Gene3D" id="3.40.190.80">
    <property type="match status" value="1"/>
</dbReference>
<dbReference type="Gene3D" id="3.30.540.10">
    <property type="entry name" value="Fructose-1,6-Bisphosphatase, subunit A, domain 1"/>
    <property type="match status" value="1"/>
</dbReference>
<dbReference type="HAMAP" id="MF_01855">
    <property type="entry name" value="FBPase_class1"/>
    <property type="match status" value="1"/>
</dbReference>
<dbReference type="InterPro" id="IPR044015">
    <property type="entry name" value="FBPase_C_dom"/>
</dbReference>
<dbReference type="InterPro" id="IPR000146">
    <property type="entry name" value="FBPase_class-1"/>
</dbReference>
<dbReference type="InterPro" id="IPR033391">
    <property type="entry name" value="FBPase_N"/>
</dbReference>
<dbReference type="InterPro" id="IPR028343">
    <property type="entry name" value="FBPtase"/>
</dbReference>
<dbReference type="InterPro" id="IPR020548">
    <property type="entry name" value="Fructose_bisphosphatase_AS"/>
</dbReference>
<dbReference type="NCBIfam" id="NF006780">
    <property type="entry name" value="PRK09293.1-4"/>
    <property type="match status" value="1"/>
</dbReference>
<dbReference type="PANTHER" id="PTHR11556">
    <property type="entry name" value="FRUCTOSE-1,6-BISPHOSPHATASE-RELATED"/>
    <property type="match status" value="1"/>
</dbReference>
<dbReference type="PANTHER" id="PTHR11556:SF35">
    <property type="entry name" value="SEDOHEPTULOSE-1,7-BISPHOSPHATASE, CHLOROPLASTIC"/>
    <property type="match status" value="1"/>
</dbReference>
<dbReference type="Pfam" id="PF00316">
    <property type="entry name" value="FBPase"/>
    <property type="match status" value="1"/>
</dbReference>
<dbReference type="Pfam" id="PF18913">
    <property type="entry name" value="FBPase_C"/>
    <property type="match status" value="1"/>
</dbReference>
<dbReference type="PIRSF" id="PIRSF500210">
    <property type="entry name" value="FBPtase"/>
    <property type="match status" value="1"/>
</dbReference>
<dbReference type="PIRSF" id="PIRSF000904">
    <property type="entry name" value="FBPtase_SBPase"/>
    <property type="match status" value="1"/>
</dbReference>
<dbReference type="PRINTS" id="PR00115">
    <property type="entry name" value="F16BPHPHTASE"/>
</dbReference>
<dbReference type="SUPFAM" id="SSF56655">
    <property type="entry name" value="Carbohydrate phosphatase"/>
    <property type="match status" value="1"/>
</dbReference>
<dbReference type="PROSITE" id="PS00124">
    <property type="entry name" value="FBPASE"/>
    <property type="match status" value="1"/>
</dbReference>
<proteinExistence type="inferred from homology"/>
<organism>
    <name type="scientific">Cereibacter sphaeroides (strain ATCC 17023 / DSM 158 / JCM 6121 / CCUG 31486 / LMG 2827 / NBRC 12203 / NCIMB 8253 / ATH 2.4.1.)</name>
    <name type="common">Rhodobacter sphaeroides</name>
    <dbReference type="NCBI Taxonomy" id="272943"/>
    <lineage>
        <taxon>Bacteria</taxon>
        <taxon>Pseudomonadati</taxon>
        <taxon>Pseudomonadota</taxon>
        <taxon>Alphaproteobacteria</taxon>
        <taxon>Rhodobacterales</taxon>
        <taxon>Paracoccaceae</taxon>
        <taxon>Cereibacter</taxon>
    </lineage>
</organism>
<reference key="1">
    <citation type="submission" date="2005-09" db="EMBL/GenBank/DDBJ databases">
        <title>Complete sequence of chromosome 2 of Rhodobacter sphaeroides 2.4.1.</title>
        <authorList>
            <person name="Copeland A."/>
            <person name="Lucas S."/>
            <person name="Lapidus A."/>
            <person name="Barry K."/>
            <person name="Detter J.C."/>
            <person name="Glavina T."/>
            <person name="Hammon N."/>
            <person name="Israni S."/>
            <person name="Pitluck S."/>
            <person name="Richardson P."/>
            <person name="Mackenzie C."/>
            <person name="Choudhary M."/>
            <person name="Larimer F."/>
            <person name="Hauser L.J."/>
            <person name="Land M."/>
            <person name="Donohue T.J."/>
            <person name="Kaplan S."/>
        </authorList>
    </citation>
    <scope>NUCLEOTIDE SEQUENCE [LARGE SCALE GENOMIC DNA]</scope>
    <source>
        <strain>ATCC 17023 / DSM 158 / JCM 6121 / CCUG 31486 / LMG 2827 / NBRC 12203 / NCIMB 8253 / ATH 2.4.1.</strain>
    </source>
</reference>